<feature type="chain" id="PRO_0000178706" description="6-phospho-5-dehydro-2-deoxy-D-gluconate aldolase">
    <location>
        <begin position="1"/>
        <end position="290"/>
    </location>
</feature>
<feature type="active site" description="Proton donor" evidence="1">
    <location>
        <position position="85"/>
    </location>
</feature>
<feature type="binding site" evidence="1">
    <location>
        <position position="86"/>
    </location>
    <ligand>
        <name>Zn(2+)</name>
        <dbReference type="ChEBI" id="CHEBI:29105"/>
        <note>catalytic</note>
    </ligand>
</feature>
<feature type="binding site" evidence="1">
    <location>
        <position position="180"/>
    </location>
    <ligand>
        <name>Zn(2+)</name>
        <dbReference type="ChEBI" id="CHEBI:29105"/>
        <note>catalytic</note>
    </ligand>
</feature>
<feature type="binding site" evidence="1">
    <location>
        <position position="181"/>
    </location>
    <ligand>
        <name>dihydroxyacetone phosphate</name>
        <dbReference type="ChEBI" id="CHEBI:57642"/>
    </ligand>
</feature>
<feature type="binding site" evidence="1">
    <location>
        <position position="208"/>
    </location>
    <ligand>
        <name>Zn(2+)</name>
        <dbReference type="ChEBI" id="CHEBI:29105"/>
        <note>catalytic</note>
    </ligand>
</feature>
<feature type="binding site" evidence="1">
    <location>
        <begin position="209"/>
        <end position="211"/>
    </location>
    <ligand>
        <name>dihydroxyacetone phosphate</name>
        <dbReference type="ChEBI" id="CHEBI:57642"/>
    </ligand>
</feature>
<feature type="binding site" evidence="1">
    <location>
        <begin position="230"/>
        <end position="233"/>
    </location>
    <ligand>
        <name>dihydroxyacetone phosphate</name>
        <dbReference type="ChEBI" id="CHEBI:57642"/>
    </ligand>
</feature>
<feature type="modified residue" description="Phosphothreonine" evidence="1">
    <location>
        <position position="233"/>
    </location>
</feature>
<organism>
    <name type="scientific">Bacillus subtilis (strain 168)</name>
    <dbReference type="NCBI Taxonomy" id="224308"/>
    <lineage>
        <taxon>Bacteria</taxon>
        <taxon>Bacillati</taxon>
        <taxon>Bacillota</taxon>
        <taxon>Bacilli</taxon>
        <taxon>Bacillales</taxon>
        <taxon>Bacillaceae</taxon>
        <taxon>Bacillus</taxon>
    </lineage>
</organism>
<protein>
    <recommendedName>
        <fullName>6-phospho-5-dehydro-2-deoxy-D-gluconate aldolase</fullName>
        <shortName>DKGP aldolase</shortName>
        <ecNumber>4.1.2.29</ecNumber>
    </recommendedName>
</protein>
<reference key="1">
    <citation type="journal article" date="1994" name="Microbiology">
        <title>Cloning and nucleotide sequencing of a 15 kb region of the Bacillus subtilis genome containing the iol operon.</title>
        <authorList>
            <person name="Yoshida K."/>
            <person name="Sano H."/>
            <person name="Miwa Y."/>
            <person name="Ogasawara N."/>
            <person name="Fujita Y."/>
        </authorList>
    </citation>
    <scope>NUCLEOTIDE SEQUENCE [GENOMIC DNA]</scope>
    <source>
        <strain>168 / BGSC1A1</strain>
    </source>
</reference>
<reference key="2">
    <citation type="journal article" date="1997" name="Nature">
        <title>The complete genome sequence of the Gram-positive bacterium Bacillus subtilis.</title>
        <authorList>
            <person name="Kunst F."/>
            <person name="Ogasawara N."/>
            <person name="Moszer I."/>
            <person name="Albertini A.M."/>
            <person name="Alloni G."/>
            <person name="Azevedo V."/>
            <person name="Bertero M.G."/>
            <person name="Bessieres P."/>
            <person name="Bolotin A."/>
            <person name="Borchert S."/>
            <person name="Borriss R."/>
            <person name="Boursier L."/>
            <person name="Brans A."/>
            <person name="Braun M."/>
            <person name="Brignell S.C."/>
            <person name="Bron S."/>
            <person name="Brouillet S."/>
            <person name="Bruschi C.V."/>
            <person name="Caldwell B."/>
            <person name="Capuano V."/>
            <person name="Carter N.M."/>
            <person name="Choi S.-K."/>
            <person name="Codani J.-J."/>
            <person name="Connerton I.F."/>
            <person name="Cummings N.J."/>
            <person name="Daniel R.A."/>
            <person name="Denizot F."/>
            <person name="Devine K.M."/>
            <person name="Duesterhoeft A."/>
            <person name="Ehrlich S.D."/>
            <person name="Emmerson P.T."/>
            <person name="Entian K.-D."/>
            <person name="Errington J."/>
            <person name="Fabret C."/>
            <person name="Ferrari E."/>
            <person name="Foulger D."/>
            <person name="Fritz C."/>
            <person name="Fujita M."/>
            <person name="Fujita Y."/>
            <person name="Fuma S."/>
            <person name="Galizzi A."/>
            <person name="Galleron N."/>
            <person name="Ghim S.-Y."/>
            <person name="Glaser P."/>
            <person name="Goffeau A."/>
            <person name="Golightly E.J."/>
            <person name="Grandi G."/>
            <person name="Guiseppi G."/>
            <person name="Guy B.J."/>
            <person name="Haga K."/>
            <person name="Haiech J."/>
            <person name="Harwood C.R."/>
            <person name="Henaut A."/>
            <person name="Hilbert H."/>
            <person name="Holsappel S."/>
            <person name="Hosono S."/>
            <person name="Hullo M.-F."/>
            <person name="Itaya M."/>
            <person name="Jones L.-M."/>
            <person name="Joris B."/>
            <person name="Karamata D."/>
            <person name="Kasahara Y."/>
            <person name="Klaerr-Blanchard M."/>
            <person name="Klein C."/>
            <person name="Kobayashi Y."/>
            <person name="Koetter P."/>
            <person name="Koningstein G."/>
            <person name="Krogh S."/>
            <person name="Kumano M."/>
            <person name="Kurita K."/>
            <person name="Lapidus A."/>
            <person name="Lardinois S."/>
            <person name="Lauber J."/>
            <person name="Lazarevic V."/>
            <person name="Lee S.-M."/>
            <person name="Levine A."/>
            <person name="Liu H."/>
            <person name="Masuda S."/>
            <person name="Mauel C."/>
            <person name="Medigue C."/>
            <person name="Medina N."/>
            <person name="Mellado R.P."/>
            <person name="Mizuno M."/>
            <person name="Moestl D."/>
            <person name="Nakai S."/>
            <person name="Noback M."/>
            <person name="Noone D."/>
            <person name="O'Reilly M."/>
            <person name="Ogawa K."/>
            <person name="Ogiwara A."/>
            <person name="Oudega B."/>
            <person name="Park S.-H."/>
            <person name="Parro V."/>
            <person name="Pohl T.M."/>
            <person name="Portetelle D."/>
            <person name="Porwollik S."/>
            <person name="Prescott A.M."/>
            <person name="Presecan E."/>
            <person name="Pujic P."/>
            <person name="Purnelle B."/>
            <person name="Rapoport G."/>
            <person name="Rey M."/>
            <person name="Reynolds S."/>
            <person name="Rieger M."/>
            <person name="Rivolta C."/>
            <person name="Rocha E."/>
            <person name="Roche B."/>
            <person name="Rose M."/>
            <person name="Sadaie Y."/>
            <person name="Sato T."/>
            <person name="Scanlan E."/>
            <person name="Schleich S."/>
            <person name="Schroeter R."/>
            <person name="Scoffone F."/>
            <person name="Sekiguchi J."/>
            <person name="Sekowska A."/>
            <person name="Seror S.J."/>
            <person name="Serror P."/>
            <person name="Shin B.-S."/>
            <person name="Soldo B."/>
            <person name="Sorokin A."/>
            <person name="Tacconi E."/>
            <person name="Takagi T."/>
            <person name="Takahashi H."/>
            <person name="Takemaru K."/>
            <person name="Takeuchi M."/>
            <person name="Tamakoshi A."/>
            <person name="Tanaka T."/>
            <person name="Terpstra P."/>
            <person name="Tognoni A."/>
            <person name="Tosato V."/>
            <person name="Uchiyama S."/>
            <person name="Vandenbol M."/>
            <person name="Vannier F."/>
            <person name="Vassarotti A."/>
            <person name="Viari A."/>
            <person name="Wambutt R."/>
            <person name="Wedler E."/>
            <person name="Wedler H."/>
            <person name="Weitzenegger T."/>
            <person name="Winters P."/>
            <person name="Wipat A."/>
            <person name="Yamamoto H."/>
            <person name="Yamane K."/>
            <person name="Yasumoto K."/>
            <person name="Yata K."/>
            <person name="Yoshida K."/>
            <person name="Yoshikawa H.-F."/>
            <person name="Zumstein E."/>
            <person name="Yoshikawa H."/>
            <person name="Danchin A."/>
        </authorList>
    </citation>
    <scope>NUCLEOTIDE SEQUENCE [LARGE SCALE GENOMIC DNA]</scope>
    <source>
        <strain>168</strain>
    </source>
</reference>
<reference key="3">
    <citation type="journal article" date="2008" name="J. Biol. Chem.">
        <title>Myo-inositol catabolism in Bacillus subtilis.</title>
        <authorList>
            <person name="Yoshida K."/>
            <person name="Yamaguchi M."/>
            <person name="Morinaga T."/>
            <person name="Kinehara M."/>
            <person name="Ikeuchi M."/>
            <person name="Ashida H."/>
            <person name="Fujita Y."/>
        </authorList>
    </citation>
    <scope>FUNCTION</scope>
    <scope>CATALYTIC ACTIVITY</scope>
    <source>
        <strain>168 / 60015</strain>
    </source>
</reference>
<accession>P42420</accession>
<dbReference type="EC" id="4.1.2.29"/>
<dbReference type="EMBL" id="D14399">
    <property type="protein sequence ID" value="BAA03299.1"/>
    <property type="molecule type" value="Genomic_DNA"/>
</dbReference>
<dbReference type="EMBL" id="AL009126">
    <property type="protein sequence ID" value="CAB16003.1"/>
    <property type="molecule type" value="Genomic_DNA"/>
</dbReference>
<dbReference type="PIR" id="B69646">
    <property type="entry name" value="B69646"/>
</dbReference>
<dbReference type="RefSeq" id="NP_391846.1">
    <property type="nucleotide sequence ID" value="NC_000964.3"/>
</dbReference>
<dbReference type="RefSeq" id="WP_003242766.1">
    <property type="nucleotide sequence ID" value="NZ_OZ025638.1"/>
</dbReference>
<dbReference type="SMR" id="P42420"/>
<dbReference type="FunCoup" id="P42420">
    <property type="interactions" value="563"/>
</dbReference>
<dbReference type="STRING" id="224308.BSU39670"/>
<dbReference type="PaxDb" id="224308-BSU39670"/>
<dbReference type="EnsemblBacteria" id="CAB16003">
    <property type="protein sequence ID" value="CAB16003"/>
    <property type="gene ID" value="BSU_39670"/>
</dbReference>
<dbReference type="GeneID" id="937601"/>
<dbReference type="KEGG" id="bsu:BSU39670"/>
<dbReference type="PATRIC" id="fig|224308.179.peg.4292"/>
<dbReference type="eggNOG" id="COG0191">
    <property type="taxonomic scope" value="Bacteria"/>
</dbReference>
<dbReference type="InParanoid" id="P42420"/>
<dbReference type="OrthoDB" id="9803995at2"/>
<dbReference type="PhylomeDB" id="P42420"/>
<dbReference type="BioCyc" id="BSUB:BSU39670-MONOMER"/>
<dbReference type="BioCyc" id="MetaCyc:BSU39670-MONOMER"/>
<dbReference type="UniPathway" id="UPA00076">
    <property type="reaction ID" value="UER00147"/>
</dbReference>
<dbReference type="Proteomes" id="UP000001570">
    <property type="component" value="Chromosome"/>
</dbReference>
<dbReference type="GO" id="GO:0047441">
    <property type="term" value="F:5-dehydro-2-deoxyphosphogluconate aldolase activity"/>
    <property type="evidence" value="ECO:0007669"/>
    <property type="project" value="UniProtKB-EC"/>
</dbReference>
<dbReference type="GO" id="GO:0004332">
    <property type="term" value="F:fructose-bisphosphate aldolase activity"/>
    <property type="evidence" value="ECO:0007669"/>
    <property type="project" value="InterPro"/>
</dbReference>
<dbReference type="GO" id="GO:0008270">
    <property type="term" value="F:zinc ion binding"/>
    <property type="evidence" value="ECO:0007669"/>
    <property type="project" value="InterPro"/>
</dbReference>
<dbReference type="GO" id="GO:0030388">
    <property type="term" value="P:fructose 1,6-bisphosphate metabolic process"/>
    <property type="evidence" value="ECO:0007669"/>
    <property type="project" value="InterPro"/>
</dbReference>
<dbReference type="GO" id="GO:0006096">
    <property type="term" value="P:glycolytic process"/>
    <property type="evidence" value="ECO:0007669"/>
    <property type="project" value="InterPro"/>
</dbReference>
<dbReference type="CDD" id="cd00947">
    <property type="entry name" value="TBP_aldolase_IIB"/>
    <property type="match status" value="1"/>
</dbReference>
<dbReference type="Gene3D" id="3.20.20.70">
    <property type="entry name" value="Aldolase class I"/>
    <property type="match status" value="1"/>
</dbReference>
<dbReference type="InterPro" id="IPR013785">
    <property type="entry name" value="Aldolase_TIM"/>
</dbReference>
<dbReference type="InterPro" id="IPR050246">
    <property type="entry name" value="Class_II_FBP_aldolase"/>
</dbReference>
<dbReference type="InterPro" id="IPR000771">
    <property type="entry name" value="FBA_II"/>
</dbReference>
<dbReference type="InterPro" id="IPR011289">
    <property type="entry name" value="Fruc_bis_ald_class-2"/>
</dbReference>
<dbReference type="NCBIfam" id="TIGR00167">
    <property type="entry name" value="cbbA"/>
    <property type="match status" value="1"/>
</dbReference>
<dbReference type="NCBIfam" id="TIGR01859">
    <property type="entry name" value="fruc_bis_ald"/>
    <property type="match status" value="1"/>
</dbReference>
<dbReference type="PANTHER" id="PTHR30304">
    <property type="entry name" value="D-TAGATOSE-1,6-BISPHOSPHATE ALDOLASE"/>
    <property type="match status" value="1"/>
</dbReference>
<dbReference type="PANTHER" id="PTHR30304:SF0">
    <property type="entry name" value="D-TAGATOSE-1,6-BISPHOSPHATE ALDOLASE SUBUNIT GATY-RELATED"/>
    <property type="match status" value="1"/>
</dbReference>
<dbReference type="Pfam" id="PF01116">
    <property type="entry name" value="F_bP_aldolase"/>
    <property type="match status" value="1"/>
</dbReference>
<dbReference type="PIRSF" id="PIRSF001359">
    <property type="entry name" value="F_bP_aldolase_II"/>
    <property type="match status" value="1"/>
</dbReference>
<dbReference type="SUPFAM" id="SSF51569">
    <property type="entry name" value="Aldolase"/>
    <property type="match status" value="1"/>
</dbReference>
<dbReference type="PROSITE" id="PS00602">
    <property type="entry name" value="ALDOLASE_CLASS_II_1"/>
    <property type="match status" value="1"/>
</dbReference>
<dbReference type="PROSITE" id="PS00806">
    <property type="entry name" value="ALDOLASE_CLASS_II_2"/>
    <property type="match status" value="1"/>
</dbReference>
<sequence>MAFVSMKELLEDAKREQYAIGQFNINGLQWTKAILQAAQKEQSPVIAAASDRLVDYLGGFKTIAAMVGALIEDMAITVPVVLHLDHGSSAERCRQAIDAGFSSVMIDGSHQPIDENIAMTKEVTDYAAKHGVSVEAEVGTVGGMEDGLVGGVRYADITECERIVKETNIDALAAALGSVHGKYQGEPNLGFKEMEAISRMTDIPLVLHGASGIPQDQIKKAITLGHAKININTECMVAWTDETRRMFQENSDLYEPRGYLTPGIEAVEETVRSKMREFGSAGKAAKQQVG</sequence>
<comment type="function">
    <text evidence="2">Produces dihydroxyacetone phosphate (DHAP or glycerone phosphate) and malonic semialdehyde (MSA or 3-oxopropanoate) from 6-phospho-5-dehydro-2-deoxy-D-gluconate (DKGP).</text>
</comment>
<comment type="catalytic activity">
    <reaction evidence="2">
        <text>6-phospho-5-dehydro-2-deoxy-D-gluconate = 3-oxopropanoate + dihydroxyacetone phosphate</text>
        <dbReference type="Rhea" id="RHEA:13177"/>
        <dbReference type="ChEBI" id="CHEBI:33190"/>
        <dbReference type="ChEBI" id="CHEBI:57642"/>
        <dbReference type="ChEBI" id="CHEBI:57949"/>
        <dbReference type="EC" id="4.1.2.29"/>
    </reaction>
</comment>
<comment type="cofactor">
    <cofactor evidence="1">
        <name>Zn(2+)</name>
        <dbReference type="ChEBI" id="CHEBI:29105"/>
    </cofactor>
</comment>
<comment type="pathway">
    <text>Polyol metabolism; myo-inositol degradation into acetyl-CoA; acetyl-CoA from myo-inositol: step 6/7.</text>
</comment>
<comment type="similarity">
    <text evidence="3">Belongs to the class II fructose-bisphosphate aldolase family. IolJ subfamily.</text>
</comment>
<proteinExistence type="evidence at protein level"/>
<keyword id="KW-0456">Lyase</keyword>
<keyword id="KW-0479">Metal-binding</keyword>
<keyword id="KW-0597">Phosphoprotein</keyword>
<keyword id="KW-1185">Reference proteome</keyword>
<keyword id="KW-0862">Zinc</keyword>
<gene>
    <name type="primary">iolJ</name>
    <name type="synonym">fbaB</name>
    <name type="synonym">yxdI</name>
    <name type="ordered locus">BSU39670</name>
    <name type="ORF">B65C</name>
</gene>
<evidence type="ECO:0000250" key="1"/>
<evidence type="ECO:0000269" key="2">
    <source>
    </source>
</evidence>
<evidence type="ECO:0000305" key="3"/>
<name>IOLJ_BACSU</name>